<comment type="function">
    <text evidence="1">Catalyzes the ATP-dependent transfer of a sulfur to tRNA to produce 4-thiouridine in position 8 of tRNAs, which functions as a near-UV photosensor. Also catalyzes the transfer of sulfur to the sulfur carrier protein ThiS, forming ThiS-thiocarboxylate. This is a step in the synthesis of thiazole, in the thiamine biosynthesis pathway. The sulfur is donated as persulfide by IscS.</text>
</comment>
<comment type="catalytic activity">
    <reaction evidence="1">
        <text>[ThiI sulfur-carrier protein]-S-sulfanyl-L-cysteine + a uridine in tRNA + 2 reduced [2Fe-2S]-[ferredoxin] + ATP + H(+) = [ThiI sulfur-carrier protein]-L-cysteine + a 4-thiouridine in tRNA + 2 oxidized [2Fe-2S]-[ferredoxin] + AMP + diphosphate</text>
        <dbReference type="Rhea" id="RHEA:24176"/>
        <dbReference type="Rhea" id="RHEA-COMP:10000"/>
        <dbReference type="Rhea" id="RHEA-COMP:10001"/>
        <dbReference type="Rhea" id="RHEA-COMP:13337"/>
        <dbReference type="Rhea" id="RHEA-COMP:13338"/>
        <dbReference type="Rhea" id="RHEA-COMP:13339"/>
        <dbReference type="Rhea" id="RHEA-COMP:13340"/>
        <dbReference type="ChEBI" id="CHEBI:15378"/>
        <dbReference type="ChEBI" id="CHEBI:29950"/>
        <dbReference type="ChEBI" id="CHEBI:30616"/>
        <dbReference type="ChEBI" id="CHEBI:33019"/>
        <dbReference type="ChEBI" id="CHEBI:33737"/>
        <dbReference type="ChEBI" id="CHEBI:33738"/>
        <dbReference type="ChEBI" id="CHEBI:61963"/>
        <dbReference type="ChEBI" id="CHEBI:65315"/>
        <dbReference type="ChEBI" id="CHEBI:136798"/>
        <dbReference type="ChEBI" id="CHEBI:456215"/>
        <dbReference type="EC" id="2.8.1.4"/>
    </reaction>
</comment>
<comment type="catalytic activity">
    <reaction evidence="1">
        <text>[ThiS sulfur-carrier protein]-C-terminal Gly-Gly-AMP + S-sulfanyl-L-cysteinyl-[cysteine desulfurase] + AH2 = [ThiS sulfur-carrier protein]-C-terminal-Gly-aminoethanethioate + L-cysteinyl-[cysteine desulfurase] + A + AMP + 2 H(+)</text>
        <dbReference type="Rhea" id="RHEA:43340"/>
        <dbReference type="Rhea" id="RHEA-COMP:12157"/>
        <dbReference type="Rhea" id="RHEA-COMP:12158"/>
        <dbReference type="Rhea" id="RHEA-COMP:12910"/>
        <dbReference type="Rhea" id="RHEA-COMP:19908"/>
        <dbReference type="ChEBI" id="CHEBI:13193"/>
        <dbReference type="ChEBI" id="CHEBI:15378"/>
        <dbReference type="ChEBI" id="CHEBI:17499"/>
        <dbReference type="ChEBI" id="CHEBI:29950"/>
        <dbReference type="ChEBI" id="CHEBI:61963"/>
        <dbReference type="ChEBI" id="CHEBI:90618"/>
        <dbReference type="ChEBI" id="CHEBI:232372"/>
        <dbReference type="ChEBI" id="CHEBI:456215"/>
    </reaction>
</comment>
<comment type="pathway">
    <text evidence="1">Cofactor biosynthesis; thiamine diphosphate biosynthesis.</text>
</comment>
<comment type="subcellular location">
    <subcellularLocation>
        <location evidence="1">Cytoplasm</location>
    </subcellularLocation>
</comment>
<comment type="similarity">
    <text evidence="1">Belongs to the ThiI family.</text>
</comment>
<keyword id="KW-0067">ATP-binding</keyword>
<keyword id="KW-0963">Cytoplasm</keyword>
<keyword id="KW-0547">Nucleotide-binding</keyword>
<keyword id="KW-0694">RNA-binding</keyword>
<keyword id="KW-0784">Thiamine biosynthesis</keyword>
<keyword id="KW-0808">Transferase</keyword>
<keyword id="KW-0820">tRNA-binding</keyword>
<gene>
    <name evidence="1" type="primary">thiI</name>
    <name type="ordered locus">PEPE_1293</name>
</gene>
<feature type="chain" id="PRO_1000074248" description="Probable tRNA sulfurtransferase">
    <location>
        <begin position="1"/>
        <end position="405"/>
    </location>
</feature>
<feature type="domain" description="THUMP" evidence="1">
    <location>
        <begin position="60"/>
        <end position="165"/>
    </location>
</feature>
<feature type="binding site" evidence="1">
    <location>
        <begin position="183"/>
        <end position="184"/>
    </location>
    <ligand>
        <name>ATP</name>
        <dbReference type="ChEBI" id="CHEBI:30616"/>
    </ligand>
</feature>
<feature type="binding site" evidence="1">
    <location>
        <begin position="208"/>
        <end position="209"/>
    </location>
    <ligand>
        <name>ATP</name>
        <dbReference type="ChEBI" id="CHEBI:30616"/>
    </ligand>
</feature>
<feature type="binding site" evidence="1">
    <location>
        <position position="265"/>
    </location>
    <ligand>
        <name>ATP</name>
        <dbReference type="ChEBI" id="CHEBI:30616"/>
    </ligand>
</feature>
<feature type="binding site" evidence="1">
    <location>
        <position position="287"/>
    </location>
    <ligand>
        <name>ATP</name>
        <dbReference type="ChEBI" id="CHEBI:30616"/>
    </ligand>
</feature>
<feature type="binding site" evidence="1">
    <location>
        <position position="296"/>
    </location>
    <ligand>
        <name>ATP</name>
        <dbReference type="ChEBI" id="CHEBI:30616"/>
    </ligand>
</feature>
<name>THII_PEDPA</name>
<protein>
    <recommendedName>
        <fullName evidence="1">Probable tRNA sulfurtransferase</fullName>
        <ecNumber evidence="1">2.8.1.4</ecNumber>
    </recommendedName>
    <alternativeName>
        <fullName evidence="1">Sulfur carrier protein ThiS sulfurtransferase</fullName>
    </alternativeName>
    <alternativeName>
        <fullName evidence="1">Thiamine biosynthesis protein ThiI</fullName>
    </alternativeName>
    <alternativeName>
        <fullName evidence="1">tRNA 4-thiouridine synthase</fullName>
    </alternativeName>
</protein>
<accession>Q03EN8</accession>
<sequence>MKYTEIMVRYGELSTKGKNRKDFIARLGGNIRKSLKDFEDVEIHPNRDRTHVTLNGTDSDAVINRLKKVFGIQNFSPMLKVEKTMEAVQAGALEMMKEQLKPGMTFKINTRRSDKEFAINTDTMNRELGGFILDNFPDNDVKMKNPDITLRVEIRSNGIFLTSEVINGAGGLPVGTAGKGMMMLSGGIDSPVAGYLGMKRGVEMEMVHFFSPPYTSEQALAKAKELSGKLAAYSGSVQFIQVPFTEIQETIKEKCPEGYLMTIQRRMMLRLVVALAKQRGGLAIFNGESLGQVASQTMESMLAINDVTTMPIIRPVVSMDKNEIIDIAKDIDTYDLSIMPFEDCCTIFAPPSPKTHPDLEKTRYFEKRIDVEGLLERSLAGVKITNIRAEENFMNQNEEVFAELL</sequence>
<proteinExistence type="inferred from homology"/>
<organism>
    <name type="scientific">Pediococcus pentosaceus (strain ATCC 25745 / CCUG 21536 / LMG 10740 / 183-1w)</name>
    <dbReference type="NCBI Taxonomy" id="278197"/>
    <lineage>
        <taxon>Bacteria</taxon>
        <taxon>Bacillati</taxon>
        <taxon>Bacillota</taxon>
        <taxon>Bacilli</taxon>
        <taxon>Lactobacillales</taxon>
        <taxon>Lactobacillaceae</taxon>
        <taxon>Pediococcus</taxon>
    </lineage>
</organism>
<dbReference type="EC" id="2.8.1.4" evidence="1"/>
<dbReference type="EMBL" id="CP000422">
    <property type="protein sequence ID" value="ABJ68334.1"/>
    <property type="molecule type" value="Genomic_DNA"/>
</dbReference>
<dbReference type="RefSeq" id="WP_011673596.1">
    <property type="nucleotide sequence ID" value="NC_008525.1"/>
</dbReference>
<dbReference type="SMR" id="Q03EN8"/>
<dbReference type="STRING" id="278197.PEPE_1293"/>
<dbReference type="GeneID" id="33061614"/>
<dbReference type="KEGG" id="ppe:PEPE_1293"/>
<dbReference type="eggNOG" id="COG0301">
    <property type="taxonomic scope" value="Bacteria"/>
</dbReference>
<dbReference type="HOGENOM" id="CLU_037952_4_0_9"/>
<dbReference type="OrthoDB" id="9773948at2"/>
<dbReference type="UniPathway" id="UPA00060"/>
<dbReference type="Proteomes" id="UP000000773">
    <property type="component" value="Chromosome"/>
</dbReference>
<dbReference type="GO" id="GO:0005829">
    <property type="term" value="C:cytosol"/>
    <property type="evidence" value="ECO:0007669"/>
    <property type="project" value="TreeGrafter"/>
</dbReference>
<dbReference type="GO" id="GO:0005524">
    <property type="term" value="F:ATP binding"/>
    <property type="evidence" value="ECO:0007669"/>
    <property type="project" value="UniProtKB-UniRule"/>
</dbReference>
<dbReference type="GO" id="GO:0004810">
    <property type="term" value="F:CCA tRNA nucleotidyltransferase activity"/>
    <property type="evidence" value="ECO:0007669"/>
    <property type="project" value="InterPro"/>
</dbReference>
<dbReference type="GO" id="GO:0000049">
    <property type="term" value="F:tRNA binding"/>
    <property type="evidence" value="ECO:0007669"/>
    <property type="project" value="UniProtKB-UniRule"/>
</dbReference>
<dbReference type="GO" id="GO:0140741">
    <property type="term" value="F:tRNA-uracil-4 sulfurtransferase activity"/>
    <property type="evidence" value="ECO:0007669"/>
    <property type="project" value="UniProtKB-EC"/>
</dbReference>
<dbReference type="GO" id="GO:0009228">
    <property type="term" value="P:thiamine biosynthetic process"/>
    <property type="evidence" value="ECO:0007669"/>
    <property type="project" value="UniProtKB-KW"/>
</dbReference>
<dbReference type="GO" id="GO:0009229">
    <property type="term" value="P:thiamine diphosphate biosynthetic process"/>
    <property type="evidence" value="ECO:0007669"/>
    <property type="project" value="UniProtKB-UniRule"/>
</dbReference>
<dbReference type="GO" id="GO:0052837">
    <property type="term" value="P:thiazole biosynthetic process"/>
    <property type="evidence" value="ECO:0007669"/>
    <property type="project" value="TreeGrafter"/>
</dbReference>
<dbReference type="GO" id="GO:0002937">
    <property type="term" value="P:tRNA 4-thiouridine biosynthesis"/>
    <property type="evidence" value="ECO:0007669"/>
    <property type="project" value="TreeGrafter"/>
</dbReference>
<dbReference type="CDD" id="cd01712">
    <property type="entry name" value="PPase_ThiI"/>
    <property type="match status" value="1"/>
</dbReference>
<dbReference type="CDD" id="cd11716">
    <property type="entry name" value="THUMP_ThiI"/>
    <property type="match status" value="1"/>
</dbReference>
<dbReference type="FunFam" id="3.40.50.620:FF:000053">
    <property type="entry name" value="Probable tRNA sulfurtransferase"/>
    <property type="match status" value="1"/>
</dbReference>
<dbReference type="Gene3D" id="3.30.2130.30">
    <property type="match status" value="1"/>
</dbReference>
<dbReference type="Gene3D" id="3.40.50.620">
    <property type="entry name" value="HUPs"/>
    <property type="match status" value="1"/>
</dbReference>
<dbReference type="HAMAP" id="MF_00021">
    <property type="entry name" value="ThiI"/>
    <property type="match status" value="1"/>
</dbReference>
<dbReference type="InterPro" id="IPR014729">
    <property type="entry name" value="Rossmann-like_a/b/a_fold"/>
</dbReference>
<dbReference type="InterPro" id="IPR020536">
    <property type="entry name" value="ThiI_AANH"/>
</dbReference>
<dbReference type="InterPro" id="IPR054173">
    <property type="entry name" value="ThiI_fer"/>
</dbReference>
<dbReference type="InterPro" id="IPR049961">
    <property type="entry name" value="ThiI_N"/>
</dbReference>
<dbReference type="InterPro" id="IPR004114">
    <property type="entry name" value="THUMP_dom"/>
</dbReference>
<dbReference type="InterPro" id="IPR049962">
    <property type="entry name" value="THUMP_ThiI"/>
</dbReference>
<dbReference type="InterPro" id="IPR003720">
    <property type="entry name" value="tRNA_STrfase"/>
</dbReference>
<dbReference type="InterPro" id="IPR050102">
    <property type="entry name" value="tRNA_sulfurtransferase_ThiI"/>
</dbReference>
<dbReference type="NCBIfam" id="TIGR00342">
    <property type="entry name" value="tRNA uracil 4-sulfurtransferase ThiI"/>
    <property type="match status" value="1"/>
</dbReference>
<dbReference type="PANTHER" id="PTHR43209">
    <property type="entry name" value="TRNA SULFURTRANSFERASE"/>
    <property type="match status" value="1"/>
</dbReference>
<dbReference type="PANTHER" id="PTHR43209:SF1">
    <property type="entry name" value="TRNA SULFURTRANSFERASE"/>
    <property type="match status" value="1"/>
</dbReference>
<dbReference type="Pfam" id="PF02568">
    <property type="entry name" value="ThiI"/>
    <property type="match status" value="1"/>
</dbReference>
<dbReference type="Pfam" id="PF22025">
    <property type="entry name" value="ThiI_fer"/>
    <property type="match status" value="1"/>
</dbReference>
<dbReference type="Pfam" id="PF02926">
    <property type="entry name" value="THUMP"/>
    <property type="match status" value="1"/>
</dbReference>
<dbReference type="SMART" id="SM00981">
    <property type="entry name" value="THUMP"/>
    <property type="match status" value="1"/>
</dbReference>
<dbReference type="SUPFAM" id="SSF52402">
    <property type="entry name" value="Adenine nucleotide alpha hydrolases-like"/>
    <property type="match status" value="1"/>
</dbReference>
<dbReference type="SUPFAM" id="SSF143437">
    <property type="entry name" value="THUMP domain-like"/>
    <property type="match status" value="1"/>
</dbReference>
<dbReference type="PROSITE" id="PS51165">
    <property type="entry name" value="THUMP"/>
    <property type="match status" value="1"/>
</dbReference>
<reference key="1">
    <citation type="journal article" date="2006" name="Proc. Natl. Acad. Sci. U.S.A.">
        <title>Comparative genomics of the lactic acid bacteria.</title>
        <authorList>
            <person name="Makarova K.S."/>
            <person name="Slesarev A."/>
            <person name="Wolf Y.I."/>
            <person name="Sorokin A."/>
            <person name="Mirkin B."/>
            <person name="Koonin E.V."/>
            <person name="Pavlov A."/>
            <person name="Pavlova N."/>
            <person name="Karamychev V."/>
            <person name="Polouchine N."/>
            <person name="Shakhova V."/>
            <person name="Grigoriev I."/>
            <person name="Lou Y."/>
            <person name="Rohksar D."/>
            <person name="Lucas S."/>
            <person name="Huang K."/>
            <person name="Goodstein D.M."/>
            <person name="Hawkins T."/>
            <person name="Plengvidhya V."/>
            <person name="Welker D."/>
            <person name="Hughes J."/>
            <person name="Goh Y."/>
            <person name="Benson A."/>
            <person name="Baldwin K."/>
            <person name="Lee J.-H."/>
            <person name="Diaz-Muniz I."/>
            <person name="Dosti B."/>
            <person name="Smeianov V."/>
            <person name="Wechter W."/>
            <person name="Barabote R."/>
            <person name="Lorca G."/>
            <person name="Altermann E."/>
            <person name="Barrangou R."/>
            <person name="Ganesan B."/>
            <person name="Xie Y."/>
            <person name="Rawsthorne H."/>
            <person name="Tamir D."/>
            <person name="Parker C."/>
            <person name="Breidt F."/>
            <person name="Broadbent J.R."/>
            <person name="Hutkins R."/>
            <person name="O'Sullivan D."/>
            <person name="Steele J."/>
            <person name="Unlu G."/>
            <person name="Saier M.H. Jr."/>
            <person name="Klaenhammer T."/>
            <person name="Richardson P."/>
            <person name="Kozyavkin S."/>
            <person name="Weimer B.C."/>
            <person name="Mills D.A."/>
        </authorList>
    </citation>
    <scope>NUCLEOTIDE SEQUENCE [LARGE SCALE GENOMIC DNA]</scope>
    <source>
        <strain>ATCC 25745 / CCUG 21536 / LMG 10740 / 183-1w</strain>
    </source>
</reference>
<evidence type="ECO:0000255" key="1">
    <source>
        <dbReference type="HAMAP-Rule" id="MF_00021"/>
    </source>
</evidence>